<comment type="miscellaneous">
    <text>The PC 3741 and TEPC 111 sequences are identical.</text>
</comment>
<evidence type="ECO:0000255" key="1">
    <source>
        <dbReference type="PROSITE-ProRule" id="PRU00114"/>
    </source>
</evidence>
<evidence type="ECO:0007829" key="2">
    <source>
        <dbReference type="PDB" id="1J05"/>
    </source>
</evidence>
<evidence type="ECO:0007829" key="3">
    <source>
        <dbReference type="PDB" id="1QFW"/>
    </source>
</evidence>
<keyword id="KW-0002">3D-structure</keyword>
<keyword id="KW-1064">Adaptive immunity</keyword>
<keyword id="KW-0903">Direct protein sequencing</keyword>
<keyword id="KW-1015">Disulfide bond</keyword>
<keyword id="KW-0391">Immunity</keyword>
<keyword id="KW-1280">Immunoglobulin</keyword>
<keyword id="KW-1185">Reference proteome</keyword>
<name>KV3A8_MOUSE</name>
<dbReference type="PIR" id="A93204">
    <property type="entry name" value="KVMS37"/>
</dbReference>
<dbReference type="PDB" id="1EJO">
    <property type="method" value="X-ray"/>
    <property type="resolution" value="2.30 A"/>
    <property type="chains" value="L=1-111"/>
</dbReference>
<dbReference type="PDB" id="1I8I">
    <property type="method" value="X-ray"/>
    <property type="resolution" value="2.40 A"/>
    <property type="chains" value="A=4-111"/>
</dbReference>
<dbReference type="PDB" id="1I8K">
    <property type="method" value="X-ray"/>
    <property type="resolution" value="1.80 A"/>
    <property type="chains" value="A=4-111"/>
</dbReference>
<dbReference type="PDB" id="1J05">
    <property type="method" value="X-ray"/>
    <property type="resolution" value="1.50 A"/>
    <property type="chains" value="A/L=1-111"/>
</dbReference>
<dbReference type="PDB" id="1MOE">
    <property type="method" value="X-ray"/>
    <property type="resolution" value="2.60 A"/>
    <property type="chains" value="A/B=2-111"/>
</dbReference>
<dbReference type="PDB" id="1QFW">
    <property type="method" value="X-ray"/>
    <property type="resolution" value="3.50 A"/>
    <property type="chains" value="L=1-111"/>
</dbReference>
<dbReference type="PDB" id="2R29">
    <property type="method" value="X-ray"/>
    <property type="resolution" value="3.00 A"/>
    <property type="chains" value="L=1-111"/>
</dbReference>
<dbReference type="PDB" id="2R69">
    <property type="method" value="X-ray"/>
    <property type="resolution" value="3.80 A"/>
    <property type="chains" value="L=1-111"/>
</dbReference>
<dbReference type="PDB" id="2R6P">
    <property type="method" value="EM"/>
    <property type="resolution" value="24.00 A"/>
    <property type="chains" value="E/G=1-111"/>
</dbReference>
<dbReference type="PDB" id="2VL5">
    <property type="method" value="X-ray"/>
    <property type="resolution" value="2.10 A"/>
    <property type="chains" value="B/D=1-111"/>
</dbReference>
<dbReference type="PDB" id="3BSZ">
    <property type="method" value="X-ray"/>
    <property type="resolution" value="3.38 A"/>
    <property type="chains" value="L/M=1-111"/>
</dbReference>
<dbReference type="PDB" id="4NJA">
    <property type="method" value="X-ray"/>
    <property type="resolution" value="2.20 A"/>
    <property type="chains" value="L=1-111"/>
</dbReference>
<dbReference type="PDBsum" id="1EJO"/>
<dbReference type="PDBsum" id="1I8I"/>
<dbReference type="PDBsum" id="1I8K"/>
<dbReference type="PDBsum" id="1J05"/>
<dbReference type="PDBsum" id="1MOE"/>
<dbReference type="PDBsum" id="1QFW"/>
<dbReference type="PDBsum" id="2R29"/>
<dbReference type="PDBsum" id="2R69"/>
<dbReference type="PDBsum" id="2R6P"/>
<dbReference type="PDBsum" id="2VL5"/>
<dbReference type="PDBsum" id="3BSZ"/>
<dbReference type="PDBsum" id="4NJA"/>
<dbReference type="SMR" id="P01660"/>
<dbReference type="FunCoup" id="P01660">
    <property type="interactions" value="779"/>
</dbReference>
<dbReference type="MINT" id="P01660"/>
<dbReference type="jPOST" id="P01660"/>
<dbReference type="InParanoid" id="P01660"/>
<dbReference type="EvolutionaryTrace" id="P01660"/>
<dbReference type="Proteomes" id="UP000000589">
    <property type="component" value="Unplaced"/>
</dbReference>
<dbReference type="RNAct" id="P01660">
    <property type="molecule type" value="protein"/>
</dbReference>
<dbReference type="GO" id="GO:0019814">
    <property type="term" value="C:immunoglobulin complex"/>
    <property type="evidence" value="ECO:0000318"/>
    <property type="project" value="GO_Central"/>
</dbReference>
<dbReference type="GO" id="GO:0002250">
    <property type="term" value="P:adaptive immune response"/>
    <property type="evidence" value="ECO:0007669"/>
    <property type="project" value="UniProtKB-KW"/>
</dbReference>
<dbReference type="GO" id="GO:0006955">
    <property type="term" value="P:immune response"/>
    <property type="evidence" value="ECO:0000318"/>
    <property type="project" value="GO_Central"/>
</dbReference>
<dbReference type="CDD" id="cd04980">
    <property type="entry name" value="IgV_L_kappa"/>
    <property type="match status" value="1"/>
</dbReference>
<dbReference type="FunFam" id="2.60.40.10:FF:000350">
    <property type="entry name" value="Immunoglobulin kappa chain variable 18-36"/>
    <property type="match status" value="1"/>
</dbReference>
<dbReference type="Gene3D" id="2.60.40.10">
    <property type="entry name" value="Immunoglobulins"/>
    <property type="match status" value="1"/>
</dbReference>
<dbReference type="InterPro" id="IPR007110">
    <property type="entry name" value="Ig-like_dom"/>
</dbReference>
<dbReference type="InterPro" id="IPR036179">
    <property type="entry name" value="Ig-like_dom_sf"/>
</dbReference>
<dbReference type="InterPro" id="IPR013783">
    <property type="entry name" value="Ig-like_fold"/>
</dbReference>
<dbReference type="InterPro" id="IPR003599">
    <property type="entry name" value="Ig_sub"/>
</dbReference>
<dbReference type="InterPro" id="IPR013106">
    <property type="entry name" value="Ig_V-set"/>
</dbReference>
<dbReference type="InterPro" id="IPR050150">
    <property type="entry name" value="IgV_Light_Chain"/>
</dbReference>
<dbReference type="PANTHER" id="PTHR23267">
    <property type="entry name" value="IMMUNOGLOBULIN LIGHT CHAIN"/>
    <property type="match status" value="1"/>
</dbReference>
<dbReference type="Pfam" id="PF07686">
    <property type="entry name" value="V-set"/>
    <property type="match status" value="1"/>
</dbReference>
<dbReference type="SMART" id="SM00409">
    <property type="entry name" value="IG"/>
    <property type="match status" value="1"/>
</dbReference>
<dbReference type="SMART" id="SM00406">
    <property type="entry name" value="IGv"/>
    <property type="match status" value="1"/>
</dbReference>
<dbReference type="SUPFAM" id="SSF48726">
    <property type="entry name" value="Immunoglobulin"/>
    <property type="match status" value="1"/>
</dbReference>
<dbReference type="PROSITE" id="PS50835">
    <property type="entry name" value="IG_LIKE"/>
    <property type="match status" value="1"/>
</dbReference>
<sequence>DIVLTQSPASLAVSLGQRATISCRASESVDSYGNSFMHWYQQKPGQPPKLLIYRASNLESGIPARFSGSGSRTDFTLTINPVEADDVATYYCQQSNEDPYTFGGGTKLEIK</sequence>
<reference key="1">
    <citation type="journal article" date="1978" name="Nature">
        <title>Rearrangement of genetic information may produce immunoglobulin diversity.</title>
        <authorList>
            <person name="Weigert M."/>
            <person name="Gatmaitan L."/>
            <person name="Loh E."/>
            <person name="Schilling J."/>
            <person name="Hood L.E."/>
        </authorList>
    </citation>
    <scope>PROTEIN SEQUENCE (PC 3741)</scope>
</reference>
<reference key="2">
    <citation type="journal article" date="1978" name="Proc. Natl. Acad. Sci. U.S.A.">
        <title>Mechanisms of antibody diversity: multiple genes encode structurally related mouse kappa variable regions.</title>
        <authorList>
            <person name="McKean D.J."/>
            <person name="Bell M."/>
            <person name="Potter M."/>
        </authorList>
    </citation>
    <scope>PROTEIN SEQUENCE (TEPC 111)</scope>
</reference>
<proteinExistence type="evidence at protein level"/>
<accession>P01660</accession>
<protein>
    <recommendedName>
        <fullName>Ig kappa chain V-III region PC 3741/TEPC 111</fullName>
    </recommendedName>
</protein>
<organism>
    <name type="scientific">Mus musculus</name>
    <name type="common">Mouse</name>
    <dbReference type="NCBI Taxonomy" id="10090"/>
    <lineage>
        <taxon>Eukaryota</taxon>
        <taxon>Metazoa</taxon>
        <taxon>Chordata</taxon>
        <taxon>Craniata</taxon>
        <taxon>Vertebrata</taxon>
        <taxon>Euteleostomi</taxon>
        <taxon>Mammalia</taxon>
        <taxon>Eutheria</taxon>
        <taxon>Euarchontoglires</taxon>
        <taxon>Glires</taxon>
        <taxon>Rodentia</taxon>
        <taxon>Myomorpha</taxon>
        <taxon>Muroidea</taxon>
        <taxon>Muridae</taxon>
        <taxon>Murinae</taxon>
        <taxon>Mus</taxon>
        <taxon>Mus</taxon>
    </lineage>
</organism>
<feature type="chain" id="PRO_0000059783" description="Ig kappa chain V-III region PC 3741/TEPC 111">
    <location>
        <begin position="1"/>
        <end position="111" status="greater than"/>
    </location>
</feature>
<feature type="region of interest" description="Framework-1">
    <location>
        <begin position="1"/>
        <end position="23"/>
    </location>
</feature>
<feature type="region of interest" description="Complementarity-determining-1">
    <location>
        <begin position="24"/>
        <end position="38"/>
    </location>
</feature>
<feature type="region of interest" description="Framework-2">
    <location>
        <begin position="39"/>
        <end position="53"/>
    </location>
</feature>
<feature type="region of interest" description="Complementarity-determining-2">
    <location>
        <begin position="54"/>
        <end position="60"/>
    </location>
</feature>
<feature type="region of interest" description="Framework-3">
    <location>
        <begin position="61"/>
        <end position="92"/>
    </location>
</feature>
<feature type="region of interest" description="Complementarity-determining-3">
    <location>
        <begin position="93"/>
        <end position="101"/>
    </location>
</feature>
<feature type="region of interest" description="Framework-4">
    <location>
        <begin position="102"/>
        <end position="111"/>
    </location>
</feature>
<feature type="disulfide bond" evidence="1">
    <location>
        <begin position="23"/>
        <end position="92"/>
    </location>
</feature>
<feature type="non-terminal residue">
    <location>
        <position position="111"/>
    </location>
</feature>
<feature type="strand" evidence="2">
    <location>
        <begin position="4"/>
        <end position="7"/>
    </location>
</feature>
<feature type="strand" evidence="2">
    <location>
        <begin position="9"/>
        <end position="12"/>
    </location>
</feature>
<feature type="strand" evidence="2">
    <location>
        <begin position="19"/>
        <end position="27"/>
    </location>
</feature>
<feature type="strand" evidence="2">
    <location>
        <begin position="37"/>
        <end position="42"/>
    </location>
</feature>
<feature type="strand" evidence="3">
    <location>
        <begin position="44"/>
        <end position="46"/>
    </location>
</feature>
<feature type="strand" evidence="2">
    <location>
        <begin position="48"/>
        <end position="53"/>
    </location>
</feature>
<feature type="turn" evidence="2">
    <location>
        <begin position="54"/>
        <end position="56"/>
    </location>
</feature>
<feature type="strand" evidence="2">
    <location>
        <begin position="66"/>
        <end position="71"/>
    </location>
</feature>
<feature type="strand" evidence="2">
    <location>
        <begin position="74"/>
        <end position="81"/>
    </location>
</feature>
<feature type="helix" evidence="2">
    <location>
        <begin position="84"/>
        <end position="86"/>
    </location>
</feature>
<feature type="strand" evidence="2">
    <location>
        <begin position="88"/>
        <end position="94"/>
    </location>
</feature>
<feature type="strand" evidence="2">
    <location>
        <begin position="96"/>
        <end position="99"/>
    </location>
</feature>
<feature type="strand" evidence="2">
    <location>
        <begin position="106"/>
        <end position="109"/>
    </location>
</feature>